<name>FXL12_MOUSE</name>
<comment type="function">
    <text evidence="1">Substrate-recognition component of the SCF (SKP1-CUL1-F-box protein)-type E3 ubiquitin ligase complex. Mediates the polyubiquitination and proteasomal degradation of CAMK1 leading to disruption of cyclin D1/CDK4 complex assembly which results in G1 cell cycle arrest in lung epithelia (By similarity).</text>
</comment>
<comment type="pathway">
    <text>Protein modification; protein ubiquitination.</text>
</comment>
<comment type="subunit">
    <text evidence="1">Interacts with SKP1 and CUL1.</text>
</comment>
<comment type="sequence caution" evidence="3">
    <conflict type="frameshift">
        <sequence resource="EMBL-CDS" id="AAF09134"/>
    </conflict>
</comment>
<sequence>MATLFDLPDLVLLEIFSYLPVRDRIRISRVCHRWKRLVDDRWLWRHVDLTLYTMRPKVMWHLLRRYMASRLYSLRMGGYLFSGSQAPQLSPALMRALGQKCPNLKRLCLHVADLSMVPITSLPSTLRTLELHSCEISMIWLQKEQDPTVLPLLECIVLDRVPAFRDEHLQGLTRFRALRSLVLGGTYRVTETGLDASLQELSYLQRLEVLGCTLSADSTLLAISRHLRDVRKIRLTVGGLSAQGLVFLEGMPVLESLCFQGPLITPDMPTPTQIVSSCLTMPKLRVLEVQGLGWEGQEAEKILCKGLPHCIVIVRACPKESMDWWM</sequence>
<evidence type="ECO:0000250" key="1"/>
<evidence type="ECO:0000255" key="2">
    <source>
        <dbReference type="PROSITE-ProRule" id="PRU00080"/>
    </source>
</evidence>
<evidence type="ECO:0000305" key="3"/>
<protein>
    <recommendedName>
        <fullName>F-box/LRR-repeat protein 12</fullName>
    </recommendedName>
    <alternativeName>
        <fullName>F-box and leucine-rich repeat protein 12</fullName>
    </alternativeName>
    <alternativeName>
        <fullName>F-box protein FBL12</fullName>
    </alternativeName>
</protein>
<proteinExistence type="evidence at transcript level"/>
<accession>Q9EPX5</accession>
<accession>Q3UVH7</accession>
<accession>Q8CDX0</accession>
<accession>Q9CY04</accession>
<accession>Q9QZN5</accession>
<gene>
    <name type="primary">Fbxl12</name>
    <name type="synonym">Fbl12</name>
</gene>
<keyword id="KW-0433">Leucine-rich repeat</keyword>
<keyword id="KW-1185">Reference proteome</keyword>
<keyword id="KW-0677">Repeat</keyword>
<keyword id="KW-0833">Ubl conjugation pathway</keyword>
<organism>
    <name type="scientific">Mus musculus</name>
    <name type="common">Mouse</name>
    <dbReference type="NCBI Taxonomy" id="10090"/>
    <lineage>
        <taxon>Eukaryota</taxon>
        <taxon>Metazoa</taxon>
        <taxon>Chordata</taxon>
        <taxon>Craniata</taxon>
        <taxon>Vertebrata</taxon>
        <taxon>Euteleostomi</taxon>
        <taxon>Mammalia</taxon>
        <taxon>Eutheria</taxon>
        <taxon>Euarchontoglires</taxon>
        <taxon>Glires</taxon>
        <taxon>Rodentia</taxon>
        <taxon>Myomorpha</taxon>
        <taxon>Muroidea</taxon>
        <taxon>Muridae</taxon>
        <taxon>Murinae</taxon>
        <taxon>Mus</taxon>
        <taxon>Mus</taxon>
    </lineage>
</organism>
<feature type="chain" id="PRO_0000119858" description="F-box/LRR-repeat protein 12">
    <location>
        <begin position="1"/>
        <end position="326"/>
    </location>
</feature>
<feature type="domain" description="F-box" evidence="2">
    <location>
        <begin position="1"/>
        <end position="47"/>
    </location>
</feature>
<feature type="repeat" description="LRR 1">
    <location>
        <begin position="51"/>
        <end position="78"/>
    </location>
</feature>
<feature type="repeat" description="LRR 2">
    <location>
        <begin position="86"/>
        <end position="111"/>
    </location>
</feature>
<feature type="repeat" description="LRR 3">
    <location>
        <begin position="113"/>
        <end position="133"/>
    </location>
</feature>
<feature type="repeat" description="LRR 4">
    <location>
        <begin position="161"/>
        <end position="185"/>
    </location>
</feature>
<feature type="repeat" description="LRR 5">
    <location>
        <begin position="186"/>
        <end position="211"/>
    </location>
</feature>
<feature type="repeat" description="LRR 6">
    <location>
        <begin position="212"/>
        <end position="236"/>
    </location>
</feature>
<feature type="repeat" description="LRR 7">
    <location>
        <begin position="237"/>
        <end position="261"/>
    </location>
</feature>
<feature type="repeat" description="LRR 8">
    <location>
        <begin position="266"/>
        <end position="291"/>
    </location>
</feature>
<dbReference type="EMBL" id="AF176525">
    <property type="protein sequence ID" value="AAF09134.1"/>
    <property type="status" value="ALT_FRAME"/>
    <property type="molecule type" value="mRNA"/>
</dbReference>
<dbReference type="EMBL" id="AF313405">
    <property type="protein sequence ID" value="AAG37272.1"/>
    <property type="molecule type" value="mRNA"/>
</dbReference>
<dbReference type="EMBL" id="AK011081">
    <property type="protein sequence ID" value="BAB27385.1"/>
    <property type="molecule type" value="mRNA"/>
</dbReference>
<dbReference type="EMBL" id="AK029429">
    <property type="protein sequence ID" value="BAC26448.1"/>
    <property type="molecule type" value="mRNA"/>
</dbReference>
<dbReference type="EMBL" id="AK030910">
    <property type="protein sequence ID" value="BAC27180.1"/>
    <property type="molecule type" value="mRNA"/>
</dbReference>
<dbReference type="EMBL" id="AK137282">
    <property type="protein sequence ID" value="BAE23292.1"/>
    <property type="molecule type" value="mRNA"/>
</dbReference>
<dbReference type="EMBL" id="BC005699">
    <property type="protein sequence ID" value="AAH05699.1"/>
    <property type="molecule type" value="mRNA"/>
</dbReference>
<dbReference type="EMBL" id="BC054471">
    <property type="protein sequence ID" value="AAH54471.1"/>
    <property type="molecule type" value="mRNA"/>
</dbReference>
<dbReference type="CCDS" id="CCDS22880.1"/>
<dbReference type="RefSeq" id="NP_001002846.1">
    <property type="nucleotide sequence ID" value="NM_001002846.2"/>
</dbReference>
<dbReference type="RefSeq" id="NP_001273458.1">
    <property type="nucleotide sequence ID" value="NM_001286529.1"/>
</dbReference>
<dbReference type="RefSeq" id="NP_001273459.1">
    <property type="nucleotide sequence ID" value="NM_001286530.1"/>
</dbReference>
<dbReference type="RefSeq" id="NP_038939.2">
    <property type="nucleotide sequence ID" value="NM_013911.3"/>
</dbReference>
<dbReference type="RefSeq" id="XP_006510460.1">
    <property type="nucleotide sequence ID" value="XM_006510397.3"/>
</dbReference>
<dbReference type="RefSeq" id="XP_006510461.1">
    <property type="nucleotide sequence ID" value="XM_006510398.2"/>
</dbReference>
<dbReference type="RefSeq" id="XP_006510462.1">
    <property type="nucleotide sequence ID" value="XM_006510399.2"/>
</dbReference>
<dbReference type="SMR" id="Q9EPX5"/>
<dbReference type="BioGRID" id="205979">
    <property type="interactions" value="7"/>
</dbReference>
<dbReference type="FunCoup" id="Q9EPX5">
    <property type="interactions" value="534"/>
</dbReference>
<dbReference type="MINT" id="Q9EPX5"/>
<dbReference type="STRING" id="10090.ENSMUSP00000119124"/>
<dbReference type="PhosphoSitePlus" id="Q9EPX5"/>
<dbReference type="jPOST" id="Q9EPX5"/>
<dbReference type="PaxDb" id="10090-ENSMUSP00000083649"/>
<dbReference type="PeptideAtlas" id="Q9EPX5"/>
<dbReference type="ProteomicsDB" id="267532"/>
<dbReference type="Antibodypedia" id="25087">
    <property type="antibodies" value="152 antibodies from 26 providers"/>
</dbReference>
<dbReference type="DNASU" id="30843"/>
<dbReference type="Ensembl" id="ENSMUST00000086459.6">
    <property type="protein sequence ID" value="ENSMUSP00000083650.5"/>
    <property type="gene ID" value="ENSMUSG00000066892.15"/>
</dbReference>
<dbReference type="Ensembl" id="ENSMUST00000148631.8">
    <property type="protein sequence ID" value="ENSMUSP00000119124.2"/>
    <property type="gene ID" value="ENSMUSG00000066892.15"/>
</dbReference>
<dbReference type="GeneID" id="30843"/>
<dbReference type="KEGG" id="mmu:30843"/>
<dbReference type="UCSC" id="uc009oiz.2">
    <property type="organism name" value="mouse"/>
</dbReference>
<dbReference type="AGR" id="MGI:1354738"/>
<dbReference type="CTD" id="54850"/>
<dbReference type="MGI" id="MGI:1354738">
    <property type="gene designation" value="Fbxl12"/>
</dbReference>
<dbReference type="VEuPathDB" id="HostDB:ENSMUSG00000066892"/>
<dbReference type="eggNOG" id="KOG1947">
    <property type="taxonomic scope" value="Eukaryota"/>
</dbReference>
<dbReference type="GeneTree" id="ENSGT00390000003354"/>
<dbReference type="HOGENOM" id="CLU_024577_1_0_1"/>
<dbReference type="InParanoid" id="Q9EPX5"/>
<dbReference type="OMA" id="RGLPHCM"/>
<dbReference type="OrthoDB" id="3219396at2759"/>
<dbReference type="PhylomeDB" id="Q9EPX5"/>
<dbReference type="TreeFam" id="TF313434"/>
<dbReference type="Reactome" id="R-MMU-8951664">
    <property type="pathway name" value="Neddylation"/>
</dbReference>
<dbReference type="Reactome" id="R-MMU-983168">
    <property type="pathway name" value="Antigen processing: Ubiquitination &amp; Proteasome degradation"/>
</dbReference>
<dbReference type="UniPathway" id="UPA00143"/>
<dbReference type="BioGRID-ORCS" id="30843">
    <property type="hits" value="3 hits in 76 CRISPR screens"/>
</dbReference>
<dbReference type="ChiTaRS" id="Fbxl12">
    <property type="organism name" value="mouse"/>
</dbReference>
<dbReference type="PRO" id="PR:Q9EPX5"/>
<dbReference type="Proteomes" id="UP000000589">
    <property type="component" value="Chromosome 9"/>
</dbReference>
<dbReference type="RNAct" id="Q9EPX5">
    <property type="molecule type" value="protein"/>
</dbReference>
<dbReference type="Bgee" id="ENSMUSG00000066892">
    <property type="expression patterns" value="Expressed in thymus and 225 other cell types or tissues"/>
</dbReference>
<dbReference type="ExpressionAtlas" id="Q9EPX5">
    <property type="expression patterns" value="baseline and differential"/>
</dbReference>
<dbReference type="GO" id="GO:0005737">
    <property type="term" value="C:cytoplasm"/>
    <property type="evidence" value="ECO:0000314"/>
    <property type="project" value="MGI"/>
</dbReference>
<dbReference type="GO" id="GO:0000151">
    <property type="term" value="C:ubiquitin ligase complex"/>
    <property type="evidence" value="ECO:0000353"/>
    <property type="project" value="MGI"/>
</dbReference>
<dbReference type="GO" id="GO:0016567">
    <property type="term" value="P:protein ubiquitination"/>
    <property type="evidence" value="ECO:0007669"/>
    <property type="project" value="UniProtKB-UniPathway"/>
</dbReference>
<dbReference type="GO" id="GO:0006511">
    <property type="term" value="P:ubiquitin-dependent protein catabolic process"/>
    <property type="evidence" value="ECO:0000353"/>
    <property type="project" value="MGI"/>
</dbReference>
<dbReference type="FunFam" id="3.80.10.10:FF:000208">
    <property type="entry name" value="F-box/LRR-repeat protein 12 isoform X1"/>
    <property type="match status" value="1"/>
</dbReference>
<dbReference type="Gene3D" id="3.80.10.10">
    <property type="entry name" value="Ribonuclease Inhibitor"/>
    <property type="match status" value="1"/>
</dbReference>
<dbReference type="InterPro" id="IPR036047">
    <property type="entry name" value="F-box-like_dom_sf"/>
</dbReference>
<dbReference type="InterPro" id="IPR001810">
    <property type="entry name" value="F-box_dom"/>
</dbReference>
<dbReference type="InterPro" id="IPR032675">
    <property type="entry name" value="LRR_dom_sf"/>
</dbReference>
<dbReference type="PANTHER" id="PTHR16134">
    <property type="entry name" value="F-BOX/TPR REPEAT PROTEIN POF3"/>
    <property type="match status" value="1"/>
</dbReference>
<dbReference type="PANTHER" id="PTHR16134:SF153">
    <property type="entry name" value="F-BOX_LRR-REPEAT PROTEIN 12"/>
    <property type="match status" value="1"/>
</dbReference>
<dbReference type="Pfam" id="PF12937">
    <property type="entry name" value="F-box-like"/>
    <property type="match status" value="1"/>
</dbReference>
<dbReference type="SMART" id="SM00256">
    <property type="entry name" value="FBOX"/>
    <property type="match status" value="1"/>
</dbReference>
<dbReference type="SUPFAM" id="SSF81383">
    <property type="entry name" value="F-box domain"/>
    <property type="match status" value="1"/>
</dbReference>
<dbReference type="SUPFAM" id="SSF52047">
    <property type="entry name" value="RNI-like"/>
    <property type="match status" value="1"/>
</dbReference>
<dbReference type="PROSITE" id="PS50181">
    <property type="entry name" value="FBOX"/>
    <property type="match status" value="1"/>
</dbReference>
<reference key="1">
    <citation type="journal article" date="1999" name="Curr. Biol.">
        <title>A family of mammalian F-box proteins.</title>
        <authorList>
            <person name="Winston J.T."/>
            <person name="Koepp D.M."/>
            <person name="Zhu C."/>
            <person name="Elledge S.J."/>
            <person name="Harper J.W."/>
        </authorList>
    </citation>
    <scope>NUCLEOTIDE SEQUENCE [MRNA]</scope>
</reference>
<reference key="2">
    <citation type="submission" date="2000-10" db="EMBL/GenBank/DDBJ databases">
        <title>F-box protein FBL12 containing leucine-rich repeats.</title>
        <authorList>
            <person name="Ilyin G.P."/>
        </authorList>
    </citation>
    <scope>NUCLEOTIDE SEQUENCE [MRNA]</scope>
</reference>
<reference key="3">
    <citation type="journal article" date="2005" name="Science">
        <title>The transcriptional landscape of the mammalian genome.</title>
        <authorList>
            <person name="Carninci P."/>
            <person name="Kasukawa T."/>
            <person name="Katayama S."/>
            <person name="Gough J."/>
            <person name="Frith M.C."/>
            <person name="Maeda N."/>
            <person name="Oyama R."/>
            <person name="Ravasi T."/>
            <person name="Lenhard B."/>
            <person name="Wells C."/>
            <person name="Kodzius R."/>
            <person name="Shimokawa K."/>
            <person name="Bajic V.B."/>
            <person name="Brenner S.E."/>
            <person name="Batalov S."/>
            <person name="Forrest A.R."/>
            <person name="Zavolan M."/>
            <person name="Davis M.J."/>
            <person name="Wilming L.G."/>
            <person name="Aidinis V."/>
            <person name="Allen J.E."/>
            <person name="Ambesi-Impiombato A."/>
            <person name="Apweiler R."/>
            <person name="Aturaliya R.N."/>
            <person name="Bailey T.L."/>
            <person name="Bansal M."/>
            <person name="Baxter L."/>
            <person name="Beisel K.W."/>
            <person name="Bersano T."/>
            <person name="Bono H."/>
            <person name="Chalk A.M."/>
            <person name="Chiu K.P."/>
            <person name="Choudhary V."/>
            <person name="Christoffels A."/>
            <person name="Clutterbuck D.R."/>
            <person name="Crowe M.L."/>
            <person name="Dalla E."/>
            <person name="Dalrymple B.P."/>
            <person name="de Bono B."/>
            <person name="Della Gatta G."/>
            <person name="di Bernardo D."/>
            <person name="Down T."/>
            <person name="Engstrom P."/>
            <person name="Fagiolini M."/>
            <person name="Faulkner G."/>
            <person name="Fletcher C.F."/>
            <person name="Fukushima T."/>
            <person name="Furuno M."/>
            <person name="Futaki S."/>
            <person name="Gariboldi M."/>
            <person name="Georgii-Hemming P."/>
            <person name="Gingeras T.R."/>
            <person name="Gojobori T."/>
            <person name="Green R.E."/>
            <person name="Gustincich S."/>
            <person name="Harbers M."/>
            <person name="Hayashi Y."/>
            <person name="Hensch T.K."/>
            <person name="Hirokawa N."/>
            <person name="Hill D."/>
            <person name="Huminiecki L."/>
            <person name="Iacono M."/>
            <person name="Ikeo K."/>
            <person name="Iwama A."/>
            <person name="Ishikawa T."/>
            <person name="Jakt M."/>
            <person name="Kanapin A."/>
            <person name="Katoh M."/>
            <person name="Kawasawa Y."/>
            <person name="Kelso J."/>
            <person name="Kitamura H."/>
            <person name="Kitano H."/>
            <person name="Kollias G."/>
            <person name="Krishnan S.P."/>
            <person name="Kruger A."/>
            <person name="Kummerfeld S.K."/>
            <person name="Kurochkin I.V."/>
            <person name="Lareau L.F."/>
            <person name="Lazarevic D."/>
            <person name="Lipovich L."/>
            <person name="Liu J."/>
            <person name="Liuni S."/>
            <person name="McWilliam S."/>
            <person name="Madan Babu M."/>
            <person name="Madera M."/>
            <person name="Marchionni L."/>
            <person name="Matsuda H."/>
            <person name="Matsuzawa S."/>
            <person name="Miki H."/>
            <person name="Mignone F."/>
            <person name="Miyake S."/>
            <person name="Morris K."/>
            <person name="Mottagui-Tabar S."/>
            <person name="Mulder N."/>
            <person name="Nakano N."/>
            <person name="Nakauchi H."/>
            <person name="Ng P."/>
            <person name="Nilsson R."/>
            <person name="Nishiguchi S."/>
            <person name="Nishikawa S."/>
            <person name="Nori F."/>
            <person name="Ohara O."/>
            <person name="Okazaki Y."/>
            <person name="Orlando V."/>
            <person name="Pang K.C."/>
            <person name="Pavan W.J."/>
            <person name="Pavesi G."/>
            <person name="Pesole G."/>
            <person name="Petrovsky N."/>
            <person name="Piazza S."/>
            <person name="Reed J."/>
            <person name="Reid J.F."/>
            <person name="Ring B.Z."/>
            <person name="Ringwald M."/>
            <person name="Rost B."/>
            <person name="Ruan Y."/>
            <person name="Salzberg S.L."/>
            <person name="Sandelin A."/>
            <person name="Schneider C."/>
            <person name="Schoenbach C."/>
            <person name="Sekiguchi K."/>
            <person name="Semple C.A."/>
            <person name="Seno S."/>
            <person name="Sessa L."/>
            <person name="Sheng Y."/>
            <person name="Shibata Y."/>
            <person name="Shimada H."/>
            <person name="Shimada K."/>
            <person name="Silva D."/>
            <person name="Sinclair B."/>
            <person name="Sperling S."/>
            <person name="Stupka E."/>
            <person name="Sugiura K."/>
            <person name="Sultana R."/>
            <person name="Takenaka Y."/>
            <person name="Taki K."/>
            <person name="Tammoja K."/>
            <person name="Tan S.L."/>
            <person name="Tang S."/>
            <person name="Taylor M.S."/>
            <person name="Tegner J."/>
            <person name="Teichmann S.A."/>
            <person name="Ueda H.R."/>
            <person name="van Nimwegen E."/>
            <person name="Verardo R."/>
            <person name="Wei C.L."/>
            <person name="Yagi K."/>
            <person name="Yamanishi H."/>
            <person name="Zabarovsky E."/>
            <person name="Zhu S."/>
            <person name="Zimmer A."/>
            <person name="Hide W."/>
            <person name="Bult C."/>
            <person name="Grimmond S.M."/>
            <person name="Teasdale R.D."/>
            <person name="Liu E.T."/>
            <person name="Brusic V."/>
            <person name="Quackenbush J."/>
            <person name="Wahlestedt C."/>
            <person name="Mattick J.S."/>
            <person name="Hume D.A."/>
            <person name="Kai C."/>
            <person name="Sasaki D."/>
            <person name="Tomaru Y."/>
            <person name="Fukuda S."/>
            <person name="Kanamori-Katayama M."/>
            <person name="Suzuki M."/>
            <person name="Aoki J."/>
            <person name="Arakawa T."/>
            <person name="Iida J."/>
            <person name="Imamura K."/>
            <person name="Itoh M."/>
            <person name="Kato T."/>
            <person name="Kawaji H."/>
            <person name="Kawagashira N."/>
            <person name="Kawashima T."/>
            <person name="Kojima M."/>
            <person name="Kondo S."/>
            <person name="Konno H."/>
            <person name="Nakano K."/>
            <person name="Ninomiya N."/>
            <person name="Nishio T."/>
            <person name="Okada M."/>
            <person name="Plessy C."/>
            <person name="Shibata K."/>
            <person name="Shiraki T."/>
            <person name="Suzuki S."/>
            <person name="Tagami M."/>
            <person name="Waki K."/>
            <person name="Watahiki A."/>
            <person name="Okamura-Oho Y."/>
            <person name="Suzuki H."/>
            <person name="Kawai J."/>
            <person name="Hayashizaki Y."/>
        </authorList>
    </citation>
    <scope>NUCLEOTIDE SEQUENCE [LARGE SCALE MRNA]</scope>
    <source>
        <strain>C57BL/6J</strain>
        <tissue>Embryonic liver</tissue>
        <tissue>Head</tissue>
        <tissue>Urinary bladder</tissue>
    </source>
</reference>
<reference key="4">
    <citation type="journal article" date="2004" name="Genome Res.">
        <title>The status, quality, and expansion of the NIH full-length cDNA project: the Mammalian Gene Collection (MGC).</title>
        <authorList>
            <consortium name="The MGC Project Team"/>
        </authorList>
    </citation>
    <scope>NUCLEOTIDE SEQUENCE [LARGE SCALE MRNA]</scope>
    <source>
        <strain>C57BL/6J</strain>
        <tissue>Mammary tumor</tissue>
    </source>
</reference>